<proteinExistence type="inferred from homology"/>
<protein>
    <recommendedName>
        <fullName evidence="1">Probable [Fe-S]-dependent transcriptional repressor</fullName>
    </recommendedName>
</protein>
<reference key="1">
    <citation type="journal article" date="2009" name="BMC Genomics">
        <title>Pseudogene accumulation in the evolutionary histories of Salmonella enterica serovars Paratyphi A and Typhi.</title>
        <authorList>
            <person name="Holt K.E."/>
            <person name="Thomson N.R."/>
            <person name="Wain J."/>
            <person name="Langridge G.C."/>
            <person name="Hasan R."/>
            <person name="Bhutta Z.A."/>
            <person name="Quail M.A."/>
            <person name="Norbertczak H."/>
            <person name="Walker D."/>
            <person name="Simmonds M."/>
            <person name="White B."/>
            <person name="Bason N."/>
            <person name="Mungall K."/>
            <person name="Dougan G."/>
            <person name="Parkhill J."/>
        </authorList>
    </citation>
    <scope>NUCLEOTIDE SEQUENCE [LARGE SCALE GENOMIC DNA]</scope>
    <source>
        <strain>AKU_12601</strain>
    </source>
</reference>
<gene>
    <name evidence="1" type="primary">feoC</name>
    <name type="ordered locus">SSPA3147</name>
</gene>
<organism>
    <name type="scientific">Salmonella paratyphi A (strain AKU_12601)</name>
    <dbReference type="NCBI Taxonomy" id="554290"/>
    <lineage>
        <taxon>Bacteria</taxon>
        <taxon>Pseudomonadati</taxon>
        <taxon>Pseudomonadota</taxon>
        <taxon>Gammaproteobacteria</taxon>
        <taxon>Enterobacterales</taxon>
        <taxon>Enterobacteriaceae</taxon>
        <taxon>Salmonella</taxon>
    </lineage>
</organism>
<comment type="function">
    <text evidence="1">May function as a transcriptional regulator that controls feoABC expression.</text>
</comment>
<comment type="similarity">
    <text evidence="1">Belongs to the FeoC family.</text>
</comment>
<sequence length="78" mass="8674">MASLIQVRDLLALRGRMEATQISHTLHAPQPMIDAMLNQLEIMGKAVRIPEEPDGCLSGSCKSCPEGKACLREWWALR</sequence>
<feature type="chain" id="PRO_1000201336" description="Probable [Fe-S]-dependent transcriptional repressor">
    <location>
        <begin position="1"/>
        <end position="78"/>
    </location>
</feature>
<feature type="binding site" evidence="1">
    <location>
        <position position="56"/>
    </location>
    <ligand>
        <name>iron-sulfur cluster</name>
        <dbReference type="ChEBI" id="CHEBI:30408"/>
    </ligand>
</feature>
<feature type="binding site" evidence="1">
    <location>
        <position position="61"/>
    </location>
    <ligand>
        <name>iron-sulfur cluster</name>
        <dbReference type="ChEBI" id="CHEBI:30408"/>
    </ligand>
</feature>
<feature type="binding site" evidence="1">
    <location>
        <position position="64"/>
    </location>
    <ligand>
        <name>iron-sulfur cluster</name>
        <dbReference type="ChEBI" id="CHEBI:30408"/>
    </ligand>
</feature>
<feature type="binding site" evidence="1">
    <location>
        <position position="70"/>
    </location>
    <ligand>
        <name>iron-sulfur cluster</name>
        <dbReference type="ChEBI" id="CHEBI:30408"/>
    </ligand>
</feature>
<accession>B5BHG5</accession>
<name>FEOC_SALPK</name>
<dbReference type="EMBL" id="FM200053">
    <property type="protein sequence ID" value="CAR61402.1"/>
    <property type="molecule type" value="Genomic_DNA"/>
</dbReference>
<dbReference type="RefSeq" id="WP_000157589.1">
    <property type="nucleotide sequence ID" value="NC_011147.1"/>
</dbReference>
<dbReference type="SMR" id="B5BHG5"/>
<dbReference type="KEGG" id="sek:SSPA3147"/>
<dbReference type="HOGENOM" id="CLU_189182_0_0_6"/>
<dbReference type="Proteomes" id="UP000001869">
    <property type="component" value="Chromosome"/>
</dbReference>
<dbReference type="GO" id="GO:0003677">
    <property type="term" value="F:DNA binding"/>
    <property type="evidence" value="ECO:0007669"/>
    <property type="project" value="UniProtKB-KW"/>
</dbReference>
<dbReference type="GO" id="GO:0005506">
    <property type="term" value="F:iron ion binding"/>
    <property type="evidence" value="ECO:0007669"/>
    <property type="project" value="UniProtKB-UniRule"/>
</dbReference>
<dbReference type="GO" id="GO:0051536">
    <property type="term" value="F:iron-sulfur cluster binding"/>
    <property type="evidence" value="ECO:0007669"/>
    <property type="project" value="UniProtKB-KW"/>
</dbReference>
<dbReference type="Gene3D" id="1.10.10.10">
    <property type="entry name" value="Winged helix-like DNA-binding domain superfamily/Winged helix DNA-binding domain"/>
    <property type="match status" value="1"/>
</dbReference>
<dbReference type="HAMAP" id="MF_01586">
    <property type="entry name" value="FeoC"/>
    <property type="match status" value="1"/>
</dbReference>
<dbReference type="InterPro" id="IPR023732">
    <property type="entry name" value="FeoC"/>
</dbReference>
<dbReference type="InterPro" id="IPR015102">
    <property type="entry name" value="Tscrpt_reg_HTH_FeoC"/>
</dbReference>
<dbReference type="InterPro" id="IPR036388">
    <property type="entry name" value="WH-like_DNA-bd_sf"/>
</dbReference>
<dbReference type="InterPro" id="IPR036390">
    <property type="entry name" value="WH_DNA-bd_sf"/>
</dbReference>
<dbReference type="NCBIfam" id="NF011960">
    <property type="entry name" value="PRK15431.1"/>
    <property type="match status" value="1"/>
</dbReference>
<dbReference type="Pfam" id="PF09012">
    <property type="entry name" value="FeoC"/>
    <property type="match status" value="1"/>
</dbReference>
<dbReference type="SUPFAM" id="SSF46785">
    <property type="entry name" value="Winged helix' DNA-binding domain"/>
    <property type="match status" value="1"/>
</dbReference>
<evidence type="ECO:0000255" key="1">
    <source>
        <dbReference type="HAMAP-Rule" id="MF_01586"/>
    </source>
</evidence>
<keyword id="KW-0238">DNA-binding</keyword>
<keyword id="KW-0408">Iron</keyword>
<keyword id="KW-0411">Iron-sulfur</keyword>
<keyword id="KW-0479">Metal-binding</keyword>
<keyword id="KW-0678">Repressor</keyword>
<keyword id="KW-0804">Transcription</keyword>
<keyword id="KW-0805">Transcription regulation</keyword>